<protein>
    <recommendedName>
        <fullName evidence="1">Fluoride-specific ion channel FluC 1</fullName>
    </recommendedName>
</protein>
<name>FLUC1_MOOTA</name>
<accession>Q2RL35</accession>
<sequence>MLYLYLAVGGFCGAVGRYFLASFINRLWPGSFPLATWIINLGGCLAMGFILTYTLERLVMGPELRLGLTTGMLGAFTTFSTFSVETLHLLQGEKIPLALLYLFASLAGGLICMQTGIFLARLPLSSKALSSIITREDGEE</sequence>
<dbReference type="EMBL" id="CP000232">
    <property type="protein sequence ID" value="ABC18854.1"/>
    <property type="molecule type" value="Genomic_DNA"/>
</dbReference>
<dbReference type="RefSeq" id="YP_429397.1">
    <property type="nucleotide sequence ID" value="NC_007644.1"/>
</dbReference>
<dbReference type="SMR" id="Q2RL35"/>
<dbReference type="STRING" id="264732.Moth_0524"/>
<dbReference type="EnsemblBacteria" id="ABC18854">
    <property type="protein sequence ID" value="ABC18854"/>
    <property type="gene ID" value="Moth_0524"/>
</dbReference>
<dbReference type="KEGG" id="mta:Moth_0524"/>
<dbReference type="PATRIC" id="fig|264732.11.peg.565"/>
<dbReference type="eggNOG" id="COG0239">
    <property type="taxonomic scope" value="Bacteria"/>
</dbReference>
<dbReference type="HOGENOM" id="CLU_114342_1_2_9"/>
<dbReference type="OrthoDB" id="9815830at2"/>
<dbReference type="GO" id="GO:0005886">
    <property type="term" value="C:plasma membrane"/>
    <property type="evidence" value="ECO:0007669"/>
    <property type="project" value="UniProtKB-SubCell"/>
</dbReference>
<dbReference type="GO" id="GO:0062054">
    <property type="term" value="F:fluoride channel activity"/>
    <property type="evidence" value="ECO:0007669"/>
    <property type="project" value="UniProtKB-UniRule"/>
</dbReference>
<dbReference type="GO" id="GO:0046872">
    <property type="term" value="F:metal ion binding"/>
    <property type="evidence" value="ECO:0007669"/>
    <property type="project" value="UniProtKB-KW"/>
</dbReference>
<dbReference type="GO" id="GO:0140114">
    <property type="term" value="P:cellular detoxification of fluoride"/>
    <property type="evidence" value="ECO:0007669"/>
    <property type="project" value="UniProtKB-UniRule"/>
</dbReference>
<dbReference type="HAMAP" id="MF_00454">
    <property type="entry name" value="FluC"/>
    <property type="match status" value="1"/>
</dbReference>
<dbReference type="InterPro" id="IPR003691">
    <property type="entry name" value="FluC"/>
</dbReference>
<dbReference type="NCBIfam" id="TIGR00494">
    <property type="entry name" value="crcB"/>
    <property type="match status" value="1"/>
</dbReference>
<dbReference type="PANTHER" id="PTHR28259">
    <property type="entry name" value="FLUORIDE EXPORT PROTEIN 1-RELATED"/>
    <property type="match status" value="1"/>
</dbReference>
<dbReference type="PANTHER" id="PTHR28259:SF1">
    <property type="entry name" value="FLUORIDE EXPORT PROTEIN 1-RELATED"/>
    <property type="match status" value="1"/>
</dbReference>
<dbReference type="Pfam" id="PF02537">
    <property type="entry name" value="CRCB"/>
    <property type="match status" value="1"/>
</dbReference>
<comment type="function">
    <text evidence="1">Fluoride-specific ion channel. Important for reducing fluoride concentration in the cell, thus reducing its toxicity.</text>
</comment>
<comment type="catalytic activity">
    <reaction evidence="1">
        <text>fluoride(in) = fluoride(out)</text>
        <dbReference type="Rhea" id="RHEA:76159"/>
        <dbReference type="ChEBI" id="CHEBI:17051"/>
    </reaction>
    <physiologicalReaction direction="left-to-right" evidence="1">
        <dbReference type="Rhea" id="RHEA:76160"/>
    </physiologicalReaction>
</comment>
<comment type="activity regulation">
    <text evidence="1">Na(+) is not transported, but it plays an essential structural role and its presence is essential for fluoride channel function.</text>
</comment>
<comment type="subcellular location">
    <subcellularLocation>
        <location evidence="1">Cell membrane</location>
        <topology evidence="1">Multi-pass membrane protein</topology>
    </subcellularLocation>
</comment>
<comment type="similarity">
    <text evidence="1">Belongs to the fluoride channel Fluc/FEX (TC 1.A.43) family.</text>
</comment>
<proteinExistence type="inferred from homology"/>
<evidence type="ECO:0000255" key="1">
    <source>
        <dbReference type="HAMAP-Rule" id="MF_00454"/>
    </source>
</evidence>
<organism>
    <name type="scientific">Moorella thermoacetica (strain ATCC 39073 / JCM 9320)</name>
    <dbReference type="NCBI Taxonomy" id="264732"/>
    <lineage>
        <taxon>Bacteria</taxon>
        <taxon>Bacillati</taxon>
        <taxon>Bacillota</taxon>
        <taxon>Clostridia</taxon>
        <taxon>Moorellales</taxon>
        <taxon>Moorellaceae</taxon>
        <taxon>Moorella</taxon>
    </lineage>
</organism>
<keyword id="KW-1003">Cell membrane</keyword>
<keyword id="KW-0407">Ion channel</keyword>
<keyword id="KW-0406">Ion transport</keyword>
<keyword id="KW-0472">Membrane</keyword>
<keyword id="KW-0479">Metal-binding</keyword>
<keyword id="KW-0915">Sodium</keyword>
<keyword id="KW-0812">Transmembrane</keyword>
<keyword id="KW-1133">Transmembrane helix</keyword>
<keyword id="KW-0813">Transport</keyword>
<reference key="1">
    <citation type="journal article" date="2008" name="Environ. Microbiol.">
        <title>The complete genome sequence of Moorella thermoacetica (f. Clostridium thermoaceticum).</title>
        <authorList>
            <person name="Pierce E."/>
            <person name="Xie G."/>
            <person name="Barabote R.D."/>
            <person name="Saunders E."/>
            <person name="Han C.S."/>
            <person name="Detter J.C."/>
            <person name="Richardson P."/>
            <person name="Brettin T.S."/>
            <person name="Das A."/>
            <person name="Ljungdahl L.G."/>
            <person name="Ragsdale S.W."/>
        </authorList>
    </citation>
    <scope>NUCLEOTIDE SEQUENCE [LARGE SCALE GENOMIC DNA]</scope>
    <source>
        <strain>ATCC 39073 / JCM 9320</strain>
    </source>
</reference>
<feature type="chain" id="PRO_0000252899" description="Fluoride-specific ion channel FluC 1">
    <location>
        <begin position="1"/>
        <end position="140"/>
    </location>
</feature>
<feature type="transmembrane region" description="Helical" evidence="1">
    <location>
        <begin position="4"/>
        <end position="24"/>
    </location>
</feature>
<feature type="transmembrane region" description="Helical" evidence="1">
    <location>
        <begin position="32"/>
        <end position="52"/>
    </location>
</feature>
<feature type="transmembrane region" description="Helical" evidence="1">
    <location>
        <begin position="70"/>
        <end position="90"/>
    </location>
</feature>
<feature type="transmembrane region" description="Helical" evidence="1">
    <location>
        <begin position="99"/>
        <end position="119"/>
    </location>
</feature>
<feature type="binding site" evidence="1">
    <location>
        <position position="74"/>
    </location>
    <ligand>
        <name>Na(+)</name>
        <dbReference type="ChEBI" id="CHEBI:29101"/>
        <note>structural</note>
    </ligand>
</feature>
<feature type="binding site" evidence="1">
    <location>
        <position position="77"/>
    </location>
    <ligand>
        <name>Na(+)</name>
        <dbReference type="ChEBI" id="CHEBI:29101"/>
        <note>structural</note>
    </ligand>
</feature>
<gene>
    <name evidence="1" type="primary">fluC1</name>
    <name evidence="1" type="synonym">crcB1</name>
    <name type="ordered locus">Moth_0524</name>
</gene>